<proteinExistence type="evidence at protein level"/>
<name>PUB9_ARATH</name>
<dbReference type="EC" id="2.3.2.27"/>
<dbReference type="EMBL" id="AC009853">
    <property type="protein sequence ID" value="AAF02146.1"/>
    <property type="molecule type" value="Genomic_DNA"/>
</dbReference>
<dbReference type="EMBL" id="CP002686">
    <property type="protein sequence ID" value="AEE74532.1"/>
    <property type="molecule type" value="Genomic_DNA"/>
</dbReference>
<dbReference type="EMBL" id="AY075636">
    <property type="protein sequence ID" value="AAL91644.1"/>
    <property type="molecule type" value="mRNA"/>
</dbReference>
<dbReference type="RefSeq" id="NP_566304.1">
    <molecule id="Q9SRT0-1"/>
    <property type="nucleotide sequence ID" value="NM_111615.4"/>
</dbReference>
<dbReference type="SMR" id="Q9SRT0"/>
<dbReference type="BioGRID" id="5259">
    <property type="interactions" value="3"/>
</dbReference>
<dbReference type="FunCoup" id="Q9SRT0">
    <property type="interactions" value="730"/>
</dbReference>
<dbReference type="STRING" id="3702.Q9SRT0"/>
<dbReference type="iPTMnet" id="Q9SRT0"/>
<dbReference type="PaxDb" id="3702-AT3G07360.1"/>
<dbReference type="ProteomicsDB" id="226264">
    <molecule id="Q9SRT0-1"/>
</dbReference>
<dbReference type="EnsemblPlants" id="AT3G07360.1">
    <molecule id="Q9SRT0-1"/>
    <property type="protein sequence ID" value="AT3G07360.1"/>
    <property type="gene ID" value="AT3G07360"/>
</dbReference>
<dbReference type="GeneID" id="819924"/>
<dbReference type="Gramene" id="AT3G07360.1">
    <molecule id="Q9SRT0-1"/>
    <property type="protein sequence ID" value="AT3G07360.1"/>
    <property type="gene ID" value="AT3G07360"/>
</dbReference>
<dbReference type="KEGG" id="ath:AT3G07360"/>
<dbReference type="Araport" id="AT3G07360"/>
<dbReference type="TAIR" id="AT3G07360">
    <property type="gene designation" value="PUB9"/>
</dbReference>
<dbReference type="eggNOG" id="KOG0167">
    <property type="taxonomic scope" value="Eukaryota"/>
</dbReference>
<dbReference type="HOGENOM" id="CLU_006348_0_0_1"/>
<dbReference type="InParanoid" id="Q9SRT0"/>
<dbReference type="OMA" id="FSICMYD"/>
<dbReference type="OrthoDB" id="7537227at2759"/>
<dbReference type="PhylomeDB" id="Q9SRT0"/>
<dbReference type="UniPathway" id="UPA00143"/>
<dbReference type="PRO" id="PR:Q9SRT0"/>
<dbReference type="Proteomes" id="UP000006548">
    <property type="component" value="Chromosome 3"/>
</dbReference>
<dbReference type="ExpressionAtlas" id="Q9SRT0">
    <property type="expression patterns" value="baseline and differential"/>
</dbReference>
<dbReference type="GO" id="GO:0005634">
    <property type="term" value="C:nucleus"/>
    <property type="evidence" value="ECO:0000314"/>
    <property type="project" value="UniProtKB"/>
</dbReference>
<dbReference type="GO" id="GO:0005886">
    <property type="term" value="C:plasma membrane"/>
    <property type="evidence" value="ECO:0000314"/>
    <property type="project" value="UniProtKB"/>
</dbReference>
<dbReference type="GO" id="GO:0070696">
    <property type="term" value="F:transmembrane receptor protein serine/threonine kinase binding"/>
    <property type="evidence" value="ECO:0000353"/>
    <property type="project" value="UniProtKB"/>
</dbReference>
<dbReference type="GO" id="GO:0004842">
    <property type="term" value="F:ubiquitin-protein transferase activity"/>
    <property type="evidence" value="ECO:0000314"/>
    <property type="project" value="TAIR"/>
</dbReference>
<dbReference type="GO" id="GO:0009738">
    <property type="term" value="P:abscisic acid-activated signaling pathway"/>
    <property type="evidence" value="ECO:0007669"/>
    <property type="project" value="UniProtKB-KW"/>
</dbReference>
<dbReference type="GO" id="GO:0071215">
    <property type="term" value="P:cellular response to abscisic acid stimulus"/>
    <property type="evidence" value="ECO:0000315"/>
    <property type="project" value="UniProtKB"/>
</dbReference>
<dbReference type="GO" id="GO:0048527">
    <property type="term" value="P:lateral root development"/>
    <property type="evidence" value="ECO:0000316"/>
    <property type="project" value="TAIR"/>
</dbReference>
<dbReference type="GO" id="GO:0016567">
    <property type="term" value="P:protein ubiquitination"/>
    <property type="evidence" value="ECO:0000314"/>
    <property type="project" value="TAIR"/>
</dbReference>
<dbReference type="CDD" id="cd16664">
    <property type="entry name" value="RING-Ubox_PUB"/>
    <property type="match status" value="1"/>
</dbReference>
<dbReference type="FunFam" id="1.25.10.10:FF:001245">
    <property type="entry name" value="RING-type E3 ubiquitin transferase"/>
    <property type="match status" value="1"/>
</dbReference>
<dbReference type="FunFam" id="3.30.40.10:FF:000114">
    <property type="entry name" value="RING-type E3 ubiquitin transferase"/>
    <property type="match status" value="1"/>
</dbReference>
<dbReference type="Gene3D" id="1.25.10.10">
    <property type="entry name" value="Leucine-rich Repeat Variant"/>
    <property type="match status" value="1"/>
</dbReference>
<dbReference type="Gene3D" id="3.30.40.10">
    <property type="entry name" value="Zinc/RING finger domain, C3HC4 (zinc finger)"/>
    <property type="match status" value="1"/>
</dbReference>
<dbReference type="InterPro" id="IPR011989">
    <property type="entry name" value="ARM-like"/>
</dbReference>
<dbReference type="InterPro" id="IPR016024">
    <property type="entry name" value="ARM-type_fold"/>
</dbReference>
<dbReference type="InterPro" id="IPR045210">
    <property type="entry name" value="RING-Ubox_PUB"/>
</dbReference>
<dbReference type="InterPro" id="IPR003613">
    <property type="entry name" value="Ubox_domain"/>
</dbReference>
<dbReference type="InterPro" id="IPR013083">
    <property type="entry name" value="Znf_RING/FYVE/PHD"/>
</dbReference>
<dbReference type="PANTHER" id="PTHR23315">
    <property type="entry name" value="U BOX DOMAIN-CONTAINING"/>
    <property type="match status" value="1"/>
</dbReference>
<dbReference type="PANTHER" id="PTHR23315:SF253">
    <property type="entry name" value="U-BOX DOMAIN-CONTAINING PROTEIN 9"/>
    <property type="match status" value="1"/>
</dbReference>
<dbReference type="Pfam" id="PF04564">
    <property type="entry name" value="U-box"/>
    <property type="match status" value="1"/>
</dbReference>
<dbReference type="SMART" id="SM00504">
    <property type="entry name" value="Ubox"/>
    <property type="match status" value="1"/>
</dbReference>
<dbReference type="SUPFAM" id="SSF48371">
    <property type="entry name" value="ARM repeat"/>
    <property type="match status" value="1"/>
</dbReference>
<dbReference type="SUPFAM" id="SSF57850">
    <property type="entry name" value="RING/U-box"/>
    <property type="match status" value="1"/>
</dbReference>
<dbReference type="PROSITE" id="PS51698">
    <property type="entry name" value="U_BOX"/>
    <property type="match status" value="1"/>
</dbReference>
<comment type="function">
    <text evidence="1 2">Functions as an E3 ubiquitin ligase (By similarity). May be involved in the abscisic acid-mediated signaling pathway, at least during germination.</text>
</comment>
<comment type="catalytic activity">
    <reaction>
        <text>S-ubiquitinyl-[E2 ubiquitin-conjugating enzyme]-L-cysteine + [acceptor protein]-L-lysine = [E2 ubiquitin-conjugating enzyme]-L-cysteine + N(6)-ubiquitinyl-[acceptor protein]-L-lysine.</text>
        <dbReference type="EC" id="2.3.2.27"/>
    </reaction>
</comment>
<comment type="pathway">
    <text>Protein modification; protein ubiquitination.</text>
</comment>
<comment type="subunit">
    <text>Binds to SD11, SD16, SD17, SD18, SD113, SD129 and SD25.</text>
</comment>
<comment type="subcellular location">
    <subcellularLocation>
        <location evidence="2">Nucleus</location>
    </subcellularLocation>
    <subcellularLocation>
        <location evidence="2">Cell membrane</location>
    </subcellularLocation>
    <text>Relocates from nucleus to plasma membrane when phosphorylated.</text>
</comment>
<comment type="alternative products">
    <event type="alternative splicing"/>
    <isoform>
        <id>Q9SRT0-1</id>
        <name>1</name>
        <sequence type="displayed"/>
    </isoform>
    <text>A number of isoforms are produced. According to EST sequences.</text>
</comment>
<comment type="PTM">
    <text evidence="2">Phosphorylated by SD1-6 and SD1-7.</text>
</comment>
<comment type="disruption phenotype">
    <text evidence="2">Reduced abscisic acid (ABA) sensitivity during seed germination.</text>
</comment>
<sequence>MAKTGVFDSDPTAIAKAKELKREMKKLLIKIDDEDDLGVQTIDQLQDALSALREATMRKMAKSSSLEMLETVSCPEEFRCPLSNELMRDPVVLASGQTYDKLFIQKWLSSGNRTCPKTQQVLPHTALTPNLLIREMISKWCKKNGLETKSQYHPNLVNEDETVTRSDREIFNSLLCKVSSSNLQDQKSAAKELRLLTRKGTEFRALFGESPDEITRLVNPLLHGSNPDEKLQEDVVTTLLNISIHDDSNKKLVCENPNVIPLLIDALRRGTVATRSNAAAAIFTLSALDSNKVLIGKSGILKPLIDLLEEGNPLAIKDVAAAIFTLCIAHENRSRAVRDGAVRVLGKKISNGLYVDELLAILAMLVTHWKAVEELGELGGVSWLLKITRESECKRNKENAIVILHTICFSDRTKWKEIKEEENAHGTITKLSREGTSRAQRKANGILDRLRKAMNLTHTA</sequence>
<keyword id="KW-0938">Abscisic acid signaling pathway</keyword>
<keyword id="KW-0025">Alternative splicing</keyword>
<keyword id="KW-1003">Cell membrane</keyword>
<keyword id="KW-0472">Membrane</keyword>
<keyword id="KW-0539">Nucleus</keyword>
<keyword id="KW-0597">Phosphoprotein</keyword>
<keyword id="KW-1185">Reference proteome</keyword>
<keyword id="KW-0677">Repeat</keyword>
<keyword id="KW-0808">Transferase</keyword>
<keyword id="KW-0833">Ubl conjugation pathway</keyword>
<evidence type="ECO:0000250" key="1"/>
<evidence type="ECO:0000269" key="2">
    <source>
    </source>
</evidence>
<evidence type="ECO:0000305" key="3"/>
<accession>Q9SRT0</accession>
<reference key="1">
    <citation type="journal article" date="2000" name="Nature">
        <title>Sequence and analysis of chromosome 3 of the plant Arabidopsis thaliana.</title>
        <authorList>
            <person name="Salanoubat M."/>
            <person name="Lemcke K."/>
            <person name="Rieger M."/>
            <person name="Ansorge W."/>
            <person name="Unseld M."/>
            <person name="Fartmann B."/>
            <person name="Valle G."/>
            <person name="Bloecker H."/>
            <person name="Perez-Alonso M."/>
            <person name="Obermaier B."/>
            <person name="Delseny M."/>
            <person name="Boutry M."/>
            <person name="Grivell L.A."/>
            <person name="Mache R."/>
            <person name="Puigdomenech P."/>
            <person name="De Simone V."/>
            <person name="Choisne N."/>
            <person name="Artiguenave F."/>
            <person name="Robert C."/>
            <person name="Brottier P."/>
            <person name="Wincker P."/>
            <person name="Cattolico L."/>
            <person name="Weissenbach J."/>
            <person name="Saurin W."/>
            <person name="Quetier F."/>
            <person name="Schaefer M."/>
            <person name="Mueller-Auer S."/>
            <person name="Gabel C."/>
            <person name="Fuchs M."/>
            <person name="Benes V."/>
            <person name="Wurmbach E."/>
            <person name="Drzonek H."/>
            <person name="Erfle H."/>
            <person name="Jordan N."/>
            <person name="Bangert S."/>
            <person name="Wiedelmann R."/>
            <person name="Kranz H."/>
            <person name="Voss H."/>
            <person name="Holland R."/>
            <person name="Brandt P."/>
            <person name="Nyakatura G."/>
            <person name="Vezzi A."/>
            <person name="D'Angelo M."/>
            <person name="Pallavicini A."/>
            <person name="Toppo S."/>
            <person name="Simionati B."/>
            <person name="Conrad A."/>
            <person name="Hornischer K."/>
            <person name="Kauer G."/>
            <person name="Loehnert T.-H."/>
            <person name="Nordsiek G."/>
            <person name="Reichelt J."/>
            <person name="Scharfe M."/>
            <person name="Schoen O."/>
            <person name="Bargues M."/>
            <person name="Terol J."/>
            <person name="Climent J."/>
            <person name="Navarro P."/>
            <person name="Collado C."/>
            <person name="Perez-Perez A."/>
            <person name="Ottenwaelder B."/>
            <person name="Duchemin D."/>
            <person name="Cooke R."/>
            <person name="Laudie M."/>
            <person name="Berger-Llauro C."/>
            <person name="Purnelle B."/>
            <person name="Masuy D."/>
            <person name="de Haan M."/>
            <person name="Maarse A.C."/>
            <person name="Alcaraz J.-P."/>
            <person name="Cottet A."/>
            <person name="Casacuberta E."/>
            <person name="Monfort A."/>
            <person name="Argiriou A."/>
            <person name="Flores M."/>
            <person name="Liguori R."/>
            <person name="Vitale D."/>
            <person name="Mannhaupt G."/>
            <person name="Haase D."/>
            <person name="Schoof H."/>
            <person name="Rudd S."/>
            <person name="Zaccaria P."/>
            <person name="Mewes H.-W."/>
            <person name="Mayer K.F.X."/>
            <person name="Kaul S."/>
            <person name="Town C.D."/>
            <person name="Koo H.L."/>
            <person name="Tallon L.J."/>
            <person name="Jenkins J."/>
            <person name="Rooney T."/>
            <person name="Rizzo M."/>
            <person name="Walts A."/>
            <person name="Utterback T."/>
            <person name="Fujii C.Y."/>
            <person name="Shea T.P."/>
            <person name="Creasy T.H."/>
            <person name="Haas B."/>
            <person name="Maiti R."/>
            <person name="Wu D."/>
            <person name="Peterson J."/>
            <person name="Van Aken S."/>
            <person name="Pai G."/>
            <person name="Militscher J."/>
            <person name="Sellers P."/>
            <person name="Gill J.E."/>
            <person name="Feldblyum T.V."/>
            <person name="Preuss D."/>
            <person name="Lin X."/>
            <person name="Nierman W.C."/>
            <person name="Salzberg S.L."/>
            <person name="White O."/>
            <person name="Venter J.C."/>
            <person name="Fraser C.M."/>
            <person name="Kaneko T."/>
            <person name="Nakamura Y."/>
            <person name="Sato S."/>
            <person name="Kato T."/>
            <person name="Asamizu E."/>
            <person name="Sasamoto S."/>
            <person name="Kimura T."/>
            <person name="Idesawa K."/>
            <person name="Kawashima K."/>
            <person name="Kishida Y."/>
            <person name="Kiyokawa C."/>
            <person name="Kohara M."/>
            <person name="Matsumoto M."/>
            <person name="Matsuno A."/>
            <person name="Muraki A."/>
            <person name="Nakayama S."/>
            <person name="Nakazaki N."/>
            <person name="Shinpo S."/>
            <person name="Takeuchi C."/>
            <person name="Wada T."/>
            <person name="Watanabe A."/>
            <person name="Yamada M."/>
            <person name="Yasuda M."/>
            <person name="Tabata S."/>
        </authorList>
    </citation>
    <scope>NUCLEOTIDE SEQUENCE [LARGE SCALE GENOMIC DNA]</scope>
    <source>
        <strain>cv. Columbia</strain>
    </source>
</reference>
<reference key="2">
    <citation type="journal article" date="2017" name="Plant J.">
        <title>Araport11: a complete reannotation of the Arabidopsis thaliana reference genome.</title>
        <authorList>
            <person name="Cheng C.Y."/>
            <person name="Krishnakumar V."/>
            <person name="Chan A.P."/>
            <person name="Thibaud-Nissen F."/>
            <person name="Schobel S."/>
            <person name="Town C.D."/>
        </authorList>
    </citation>
    <scope>GENOME REANNOTATION</scope>
    <source>
        <strain>cv. Columbia</strain>
    </source>
</reference>
<reference key="3">
    <citation type="journal article" date="2003" name="Science">
        <title>Empirical analysis of transcriptional activity in the Arabidopsis genome.</title>
        <authorList>
            <person name="Yamada K."/>
            <person name="Lim J."/>
            <person name="Dale J.M."/>
            <person name="Chen H."/>
            <person name="Shinn P."/>
            <person name="Palm C.J."/>
            <person name="Southwick A.M."/>
            <person name="Wu H.C."/>
            <person name="Kim C.J."/>
            <person name="Nguyen M."/>
            <person name="Pham P.K."/>
            <person name="Cheuk R.F."/>
            <person name="Karlin-Newmann G."/>
            <person name="Liu S.X."/>
            <person name="Lam B."/>
            <person name="Sakano H."/>
            <person name="Wu T."/>
            <person name="Yu G."/>
            <person name="Miranda M."/>
            <person name="Quach H.L."/>
            <person name="Tripp M."/>
            <person name="Chang C.H."/>
            <person name="Lee J.M."/>
            <person name="Toriumi M.J."/>
            <person name="Chan M.M."/>
            <person name="Tang C.C."/>
            <person name="Onodera C.S."/>
            <person name="Deng J.M."/>
            <person name="Akiyama K."/>
            <person name="Ansari Y."/>
            <person name="Arakawa T."/>
            <person name="Banh J."/>
            <person name="Banno F."/>
            <person name="Bowser L."/>
            <person name="Brooks S.Y."/>
            <person name="Carninci P."/>
            <person name="Chao Q."/>
            <person name="Choy N."/>
            <person name="Enju A."/>
            <person name="Goldsmith A.D."/>
            <person name="Gurjal M."/>
            <person name="Hansen N.F."/>
            <person name="Hayashizaki Y."/>
            <person name="Johnson-Hopson C."/>
            <person name="Hsuan V.W."/>
            <person name="Iida K."/>
            <person name="Karnes M."/>
            <person name="Khan S."/>
            <person name="Koesema E."/>
            <person name="Ishida J."/>
            <person name="Jiang P.X."/>
            <person name="Jones T."/>
            <person name="Kawai J."/>
            <person name="Kamiya A."/>
            <person name="Meyers C."/>
            <person name="Nakajima M."/>
            <person name="Narusaka M."/>
            <person name="Seki M."/>
            <person name="Sakurai T."/>
            <person name="Satou M."/>
            <person name="Tamse R."/>
            <person name="Vaysberg M."/>
            <person name="Wallender E.K."/>
            <person name="Wong C."/>
            <person name="Yamamura Y."/>
            <person name="Yuan S."/>
            <person name="Shinozaki K."/>
            <person name="Davis R.W."/>
            <person name="Theologis A."/>
            <person name="Ecker J.R."/>
        </authorList>
    </citation>
    <scope>NUCLEOTIDE SEQUENCE [LARGE SCALE MRNA]</scope>
    <source>
        <strain>cv. Columbia</strain>
    </source>
</reference>
<reference key="4">
    <citation type="journal article" date="2001" name="Trends Plant Sci.">
        <title>The U-box protein family in plants.</title>
        <authorList>
            <person name="Azevedo C."/>
            <person name="Santos-Rosa M.J."/>
            <person name="Shirasu K."/>
        </authorList>
    </citation>
    <scope>GENE FAMILY ORGANIZATION</scope>
    <scope>NOMENCLATURE</scope>
</reference>
<reference key="5">
    <citation type="journal article" date="2004" name="Plant Physiol.">
        <title>A large complement of the predicted Arabidopsis ARM repeat proteins are members of the U-box E3 ubiquitin ligase family.</title>
        <authorList>
            <person name="Mudgil Y."/>
            <person name="Shiu S.-H."/>
            <person name="Stone S.L."/>
            <person name="Salt J.N."/>
            <person name="Goring D.R."/>
        </authorList>
    </citation>
    <scope>GENE FAMILY ORGANIZATION</scope>
</reference>
<reference key="6">
    <citation type="journal article" date="2008" name="Plant Physiol.">
        <title>Interactions between the S-domain receptor kinases and AtPUB-ARM E3 ubiquitin ligases suggest a conserved signaling pathway in Arabidopsis.</title>
        <authorList>
            <person name="Samuel M.A."/>
            <person name="Mudgil Y."/>
            <person name="Salt J.N."/>
            <person name="Delmas F."/>
            <person name="Ramachandran S."/>
            <person name="Chilelli A."/>
            <person name="Goring D.R."/>
        </authorList>
    </citation>
    <scope>INTERACTION WITH SD11; SD16; SD17; SD18; SD113; SD129 AND SD25</scope>
    <scope>SUBCELLULAR LOCATION</scope>
    <scope>PHOSPHORYLATION</scope>
    <scope>DISRUPTION PHENOTYPE</scope>
    <scope>FUNCTION</scope>
</reference>
<feature type="chain" id="PRO_0000322154" description="U-box domain-containing protein 9">
    <location>
        <begin position="1"/>
        <end position="460"/>
    </location>
</feature>
<feature type="domain" description="U-box">
    <location>
        <begin position="73"/>
        <end position="147"/>
    </location>
</feature>
<feature type="repeat" description="ARM 1">
    <location>
        <begin position="201"/>
        <end position="244"/>
    </location>
</feature>
<feature type="repeat" description="ARM 2">
    <location>
        <begin position="248"/>
        <end position="287"/>
    </location>
</feature>
<feature type="repeat" description="ARM 3">
    <location>
        <begin position="289"/>
        <end position="328"/>
    </location>
</feature>
<protein>
    <recommendedName>
        <fullName>U-box domain-containing protein 9</fullName>
        <ecNumber>2.3.2.27</ecNumber>
    </recommendedName>
    <alternativeName>
        <fullName>Plant U-box protein 9</fullName>
    </alternativeName>
    <alternativeName>
        <fullName evidence="3">RING-type E3 ubiquitin transferase PUB9</fullName>
    </alternativeName>
</protein>
<organism>
    <name type="scientific">Arabidopsis thaliana</name>
    <name type="common">Mouse-ear cress</name>
    <dbReference type="NCBI Taxonomy" id="3702"/>
    <lineage>
        <taxon>Eukaryota</taxon>
        <taxon>Viridiplantae</taxon>
        <taxon>Streptophyta</taxon>
        <taxon>Embryophyta</taxon>
        <taxon>Tracheophyta</taxon>
        <taxon>Spermatophyta</taxon>
        <taxon>Magnoliopsida</taxon>
        <taxon>eudicotyledons</taxon>
        <taxon>Gunneridae</taxon>
        <taxon>Pentapetalae</taxon>
        <taxon>rosids</taxon>
        <taxon>malvids</taxon>
        <taxon>Brassicales</taxon>
        <taxon>Brassicaceae</taxon>
        <taxon>Camelineae</taxon>
        <taxon>Arabidopsis</taxon>
    </lineage>
</organism>
<gene>
    <name type="primary">PUB9</name>
    <name type="ordered locus">At3g07360</name>
    <name type="ORF">F21O3.7</name>
</gene>